<evidence type="ECO:0000256" key="1">
    <source>
        <dbReference type="SAM" id="MobiDB-lite"/>
    </source>
</evidence>
<evidence type="ECO:0000305" key="2"/>
<evidence type="ECO:0000305" key="3">
    <source>
    </source>
</evidence>
<organism>
    <name type="scientific">Mesomycoplasma hyorhinis</name>
    <name type="common">Mycoplasma hyorhinis</name>
    <dbReference type="NCBI Taxonomy" id="2100"/>
    <lineage>
        <taxon>Bacteria</taxon>
        <taxon>Bacillati</taxon>
        <taxon>Mycoplasmatota</taxon>
        <taxon>Mycoplasmoidales</taxon>
        <taxon>Metamycoplasmataceae</taxon>
        <taxon>Mesomycoplasma</taxon>
    </lineage>
</organism>
<keyword id="KW-1003">Cell membrane</keyword>
<keyword id="KW-0449">Lipoprotein</keyword>
<keyword id="KW-0472">Membrane</keyword>
<keyword id="KW-0564">Palmitate</keyword>
<keyword id="KW-0677">Repeat</keyword>
<keyword id="KW-0732">Signal</keyword>
<proteinExistence type="predicted"/>
<comment type="function">
    <text evidence="3">Responsible for the antigenic diversity for host adaptation. Expression in E.coli of a construct containing vlpD, vlpE, and vlpF yields antigenically distinguishable products corresponding to each gene.</text>
</comment>
<comment type="subcellular location">
    <subcellularLocation>
        <location evidence="2">Cell membrane</location>
        <topology evidence="2">Lipid-anchor</topology>
    </subcellularLocation>
</comment>
<comment type="miscellaneous">
    <text>The numbers of repeats can vary and is one of the basis of the antigenic diversity.</text>
</comment>
<sequence>MKKSIFSKKLLVSFGSLVTLAAIPLIAISCGQTNTDQSQQPGSGSTTGGQSGTTTGTDSTTGGQTGSESGTTTGGQTGTTTGGQSDSTSTSKEQGSSDSTSTSKEQGSSDSTSTSKEQGSSDSTSTSKEQGSSDSTSTSKEQGSSDSTSTSKEQGSSDSTSTSNMNTR</sequence>
<protein>
    <recommendedName>
        <fullName>Variant surface antigen D</fullName>
    </recommendedName>
    <alternativeName>
        <fullName>VlpD prolipoprotein</fullName>
    </alternativeName>
</protein>
<reference key="1">
    <citation type="journal article" date="1995" name="J. Bacteriol.">
        <title>Increased structural and combinatorial diversity in an extended family of genes encoding Vlp surface proteins of Mycoplasma hyorhinis.</title>
        <authorList>
            <person name="Yogev D."/>
            <person name="Watson-Mckown R."/>
            <person name="Rosengarten R."/>
            <person name="Im J."/>
            <person name="Wise K.S."/>
        </authorList>
    </citation>
    <scope>NUCLEOTIDE SEQUENCE [GENOMIC DNA]</scope>
    <scope>POSSIBLE EXPRESSION</scope>
    <source>
        <strain>GDL-1</strain>
    </source>
</reference>
<reference key="2">
    <citation type="submission" date="1997-05" db="EMBL/GenBank/DDBJ databases">
        <authorList>
            <person name="Watson-Mckown R."/>
        </authorList>
    </citation>
    <scope>SEQUENCE REVISION TO C-TERMINUS</scope>
</reference>
<accession>Q49536</accession>
<accession>O05665</accession>
<dbReference type="EMBL" id="U35016">
    <property type="protein sequence ID" value="AAC45470.1"/>
    <property type="molecule type" value="Genomic_DNA"/>
</dbReference>
<dbReference type="SMR" id="Q49536"/>
<dbReference type="GO" id="GO:0005886">
    <property type="term" value="C:plasma membrane"/>
    <property type="evidence" value="ECO:0007669"/>
    <property type="project" value="UniProtKB-SubCell"/>
</dbReference>
<dbReference type="InterPro" id="IPR049890">
    <property type="entry name" value="VlpA-F-like_signal"/>
</dbReference>
<dbReference type="NCBIfam" id="NF033817">
    <property type="entry name" value="Mplas_variab_LP"/>
    <property type="match status" value="1"/>
</dbReference>
<dbReference type="PROSITE" id="PS51257">
    <property type="entry name" value="PROKAR_LIPOPROTEIN"/>
    <property type="match status" value="1"/>
</dbReference>
<gene>
    <name type="primary">vlpD</name>
</gene>
<feature type="signal peptide" evidence="2">
    <location>
        <begin position="1"/>
        <end position="29"/>
    </location>
</feature>
<feature type="chain" id="PRO_0000018216" description="Variant surface antigen D">
    <location>
        <begin position="30"/>
        <end position="168"/>
    </location>
</feature>
<feature type="repeat" description="1">
    <location>
        <begin position="81"/>
        <end position="92"/>
    </location>
</feature>
<feature type="repeat" description="2">
    <location>
        <begin position="93"/>
        <end position="104"/>
    </location>
</feature>
<feature type="repeat" description="3">
    <location>
        <begin position="105"/>
        <end position="116"/>
    </location>
</feature>
<feature type="repeat" description="4">
    <location>
        <begin position="117"/>
        <end position="128"/>
    </location>
</feature>
<feature type="repeat" description="5">
    <location>
        <begin position="129"/>
        <end position="140"/>
    </location>
</feature>
<feature type="repeat" description="6">
    <location>
        <begin position="141"/>
        <end position="152"/>
    </location>
</feature>
<feature type="repeat" description="7">
    <location>
        <begin position="153"/>
        <end position="164"/>
    </location>
</feature>
<feature type="region of interest" description="Disordered" evidence="1">
    <location>
        <begin position="33"/>
        <end position="168"/>
    </location>
</feature>
<feature type="region of interest" description="7 X 12 AA tandem repeats">
    <location>
        <begin position="81"/>
        <end position="164"/>
    </location>
</feature>
<feature type="compositionally biased region" description="Low complexity" evidence="1">
    <location>
        <begin position="35"/>
        <end position="44"/>
    </location>
</feature>
<feature type="compositionally biased region" description="Low complexity" evidence="1">
    <location>
        <begin position="52"/>
        <end position="71"/>
    </location>
</feature>
<feature type="compositionally biased region" description="Gly residues" evidence="1">
    <location>
        <begin position="72"/>
        <end position="81"/>
    </location>
</feature>
<feature type="compositionally biased region" description="Low complexity" evidence="1">
    <location>
        <begin position="82"/>
        <end position="168"/>
    </location>
</feature>
<feature type="lipid moiety-binding region" description="N-palmitoyl cysteine" evidence="2">
    <location>
        <position position="30"/>
    </location>
</feature>
<feature type="lipid moiety-binding region" description="S-diacylglycerol cysteine" evidence="2">
    <location>
        <position position="30"/>
    </location>
</feature>
<name>VLPD_MESHY</name>